<name>CPB2_CAEBR</name>
<proteinExistence type="evidence at transcript level"/>
<protein>
    <recommendedName>
        <fullName>Cytoplasmic polyadenylation element-binding protein 2</fullName>
    </recommendedName>
</protein>
<dbReference type="EMBL" id="AY589618">
    <property type="protein sequence ID" value="AAT72419.1"/>
    <property type="molecule type" value="Genomic_DNA"/>
</dbReference>
<dbReference type="EMBL" id="AY589611">
    <property type="protein sequence ID" value="AAT72448.1"/>
    <property type="molecule type" value="mRNA"/>
</dbReference>
<dbReference type="EMBL" id="HE601438">
    <property type="protein sequence ID" value="CAP23955.3"/>
    <property type="status" value="ALT_SEQ"/>
    <property type="molecule type" value="Genomic_DNA"/>
</dbReference>
<dbReference type="SMR" id="Q6E3F3"/>
<dbReference type="FunCoup" id="Q6E3F3">
    <property type="interactions" value="3"/>
</dbReference>
<dbReference type="STRING" id="6238.Q6E3F3"/>
<dbReference type="EnsemblMetazoa" id="CBG02588a.1">
    <property type="protein sequence ID" value="CBG02588a.1"/>
    <property type="gene ID" value="WBGene00025614"/>
</dbReference>
<dbReference type="WormBase" id="CBG02588a">
    <property type="protein sequence ID" value="CBP30367"/>
    <property type="gene ID" value="WBGene00025614"/>
    <property type="gene designation" value="Cbr-cpb-2"/>
</dbReference>
<dbReference type="eggNOG" id="KOG0129">
    <property type="taxonomic scope" value="Eukaryota"/>
</dbReference>
<dbReference type="HOGENOM" id="CLU_034584_0_0_1"/>
<dbReference type="InParanoid" id="Q6E3F3"/>
<dbReference type="Proteomes" id="UP000008549">
    <property type="component" value="Unassembled WGS sequence"/>
</dbReference>
<dbReference type="GO" id="GO:0005737">
    <property type="term" value="C:cytoplasm"/>
    <property type="evidence" value="ECO:0000318"/>
    <property type="project" value="GO_Central"/>
</dbReference>
<dbReference type="GO" id="GO:0005634">
    <property type="term" value="C:nucleus"/>
    <property type="evidence" value="ECO:0000318"/>
    <property type="project" value="GO_Central"/>
</dbReference>
<dbReference type="GO" id="GO:0003730">
    <property type="term" value="F:mRNA 3'-UTR binding"/>
    <property type="evidence" value="ECO:0000318"/>
    <property type="project" value="GO_Central"/>
</dbReference>
<dbReference type="GO" id="GO:0000900">
    <property type="term" value="F:mRNA regulatory element binding translation repressor activity"/>
    <property type="evidence" value="ECO:0000318"/>
    <property type="project" value="GO_Central"/>
</dbReference>
<dbReference type="GO" id="GO:0043022">
    <property type="term" value="F:ribosome binding"/>
    <property type="evidence" value="ECO:0000318"/>
    <property type="project" value="GO_Central"/>
</dbReference>
<dbReference type="GO" id="GO:0008135">
    <property type="term" value="F:translation factor activity, RNA binding"/>
    <property type="evidence" value="ECO:0000318"/>
    <property type="project" value="GO_Central"/>
</dbReference>
<dbReference type="GO" id="GO:2000766">
    <property type="term" value="P:negative regulation of cytoplasmic translation"/>
    <property type="evidence" value="ECO:0000318"/>
    <property type="project" value="GO_Central"/>
</dbReference>
<dbReference type="CDD" id="cd19757">
    <property type="entry name" value="Bbox1"/>
    <property type="match status" value="1"/>
</dbReference>
<dbReference type="CDD" id="cd12726">
    <property type="entry name" value="RRM2_CPEB2_like"/>
    <property type="match status" value="1"/>
</dbReference>
<dbReference type="FunFam" id="3.30.70.330:FF:000483">
    <property type="entry name" value="Cytoplasmic polyadenylation element-binding protein 2"/>
    <property type="match status" value="1"/>
</dbReference>
<dbReference type="Gene3D" id="3.30.70.330">
    <property type="match status" value="2"/>
</dbReference>
<dbReference type="Gene3D" id="4.10.640.40">
    <property type="entry name" value="Cytoplasmic polyadenylation element-binding protein, ZZ domain"/>
    <property type="match status" value="1"/>
</dbReference>
<dbReference type="InterPro" id="IPR032296">
    <property type="entry name" value="CEBP_ZZ"/>
</dbReference>
<dbReference type="InterPro" id="IPR038446">
    <property type="entry name" value="CEBP_ZZ_sf"/>
</dbReference>
<dbReference type="InterPro" id="IPR034819">
    <property type="entry name" value="CPEB"/>
</dbReference>
<dbReference type="InterPro" id="IPR012677">
    <property type="entry name" value="Nucleotide-bd_a/b_plait_sf"/>
</dbReference>
<dbReference type="InterPro" id="IPR035979">
    <property type="entry name" value="RBD_domain_sf"/>
</dbReference>
<dbReference type="InterPro" id="IPR000504">
    <property type="entry name" value="RRM_dom"/>
</dbReference>
<dbReference type="PANTHER" id="PTHR12566">
    <property type="entry name" value="CYTOPLASMIC POLYADENYLATION ELEMENT BINDING PROTEIN CPEB"/>
    <property type="match status" value="1"/>
</dbReference>
<dbReference type="PANTHER" id="PTHR12566:SF12">
    <property type="entry name" value="TRANSLATIONAL REGULATOR ORB2"/>
    <property type="match status" value="1"/>
</dbReference>
<dbReference type="Pfam" id="PF16366">
    <property type="entry name" value="CEBP_ZZ"/>
    <property type="match status" value="1"/>
</dbReference>
<dbReference type="Pfam" id="PF16367">
    <property type="entry name" value="RRM_7"/>
    <property type="match status" value="2"/>
</dbReference>
<dbReference type="SUPFAM" id="SSF54928">
    <property type="entry name" value="RNA-binding domain, RBD"/>
    <property type="match status" value="2"/>
</dbReference>
<dbReference type="PROSITE" id="PS50102">
    <property type="entry name" value="RRM"/>
    <property type="match status" value="1"/>
</dbReference>
<keyword id="KW-1185">Reference proteome</keyword>
<keyword id="KW-0694">RNA-binding</keyword>
<organism>
    <name type="scientific">Caenorhabditis briggsae</name>
    <dbReference type="NCBI Taxonomy" id="6238"/>
    <lineage>
        <taxon>Eukaryota</taxon>
        <taxon>Metazoa</taxon>
        <taxon>Ecdysozoa</taxon>
        <taxon>Nematoda</taxon>
        <taxon>Chromadorea</taxon>
        <taxon>Rhabditida</taxon>
        <taxon>Rhabditina</taxon>
        <taxon>Rhabditomorpha</taxon>
        <taxon>Rhabditoidea</taxon>
        <taxon>Rhabditidae</taxon>
        <taxon>Peloderinae</taxon>
        <taxon>Caenorhabditis</taxon>
    </lineage>
</organism>
<reference key="1">
    <citation type="journal article" date="2004" name="Genome Res.">
        <title>A phylogeny of Caenorhabditis reveals frequent loss of introns during nematode evolution.</title>
        <authorList>
            <person name="Cho S."/>
            <person name="Jin S.W."/>
            <person name="Cohen A."/>
            <person name="Ellis R.E."/>
        </authorList>
    </citation>
    <scope>NUCLEOTIDE SEQUENCE [GENOMIC DNA / MRNA]</scope>
</reference>
<reference key="2">
    <citation type="journal article" date="2003" name="PLoS Biol.">
        <title>The genome sequence of Caenorhabditis briggsae: a platform for comparative genomics.</title>
        <authorList>
            <person name="Stein L.D."/>
            <person name="Bao Z."/>
            <person name="Blasiar D."/>
            <person name="Blumenthal T."/>
            <person name="Brent M.R."/>
            <person name="Chen N."/>
            <person name="Chinwalla A."/>
            <person name="Clarke L."/>
            <person name="Clee C."/>
            <person name="Coghlan A."/>
            <person name="Coulson A."/>
            <person name="D'Eustachio P."/>
            <person name="Fitch D.H.A."/>
            <person name="Fulton L.A."/>
            <person name="Fulton R.E."/>
            <person name="Griffiths-Jones S."/>
            <person name="Harris T.W."/>
            <person name="Hillier L.W."/>
            <person name="Kamath R."/>
            <person name="Kuwabara P.E."/>
            <person name="Mardis E.R."/>
            <person name="Marra M.A."/>
            <person name="Miner T.L."/>
            <person name="Minx P."/>
            <person name="Mullikin J.C."/>
            <person name="Plumb R.W."/>
            <person name="Rogers J."/>
            <person name="Schein J.E."/>
            <person name="Sohrmann M."/>
            <person name="Spieth J."/>
            <person name="Stajich J.E."/>
            <person name="Wei C."/>
            <person name="Willey D."/>
            <person name="Wilson R.K."/>
            <person name="Durbin R.M."/>
            <person name="Waterston R.H."/>
        </authorList>
    </citation>
    <scope>NUCLEOTIDE SEQUENCE [LARGE SCALE GENOMIC DNA]</scope>
    <source>
        <strain>AF16</strain>
    </source>
</reference>
<gene>
    <name type="primary">cpb-2</name>
    <name type="ORF">CBG02588</name>
</gene>
<evidence type="ECO:0000250" key="1"/>
<evidence type="ECO:0000255" key="2">
    <source>
        <dbReference type="PROSITE-ProRule" id="PRU00176"/>
    </source>
</evidence>
<evidence type="ECO:0000256" key="3">
    <source>
        <dbReference type="SAM" id="MobiDB-lite"/>
    </source>
</evidence>
<evidence type="ECO:0000305" key="4"/>
<accession>Q6E3F3</accession>
<accession>A8WTZ3</accession>
<accession>Q620Z3</accession>
<comment type="function">
    <text evidence="1">Cytoplasmic polyadenylation element binding protein that binds to and regulates the translation of specific mRNAs.</text>
</comment>
<comment type="sequence caution" evidence="4">
    <conflict type="erroneous gene model prediction">
        <sequence resource="EMBL-CDS" id="CAP23955"/>
    </conflict>
</comment>
<feature type="chain" id="PRO_0000081512" description="Cytoplasmic polyadenylation element-binding protein 2">
    <location>
        <begin position="1"/>
        <end position="566"/>
    </location>
</feature>
<feature type="domain" description="RRM" evidence="2">
    <location>
        <begin position="430"/>
        <end position="512"/>
    </location>
</feature>
<feature type="region of interest" description="Disordered" evidence="3">
    <location>
        <begin position="17"/>
        <end position="46"/>
    </location>
</feature>
<feature type="region of interest" description="Disordered" evidence="3">
    <location>
        <begin position="64"/>
        <end position="98"/>
    </location>
</feature>
<feature type="compositionally biased region" description="Acidic residues" evidence="3">
    <location>
        <begin position="87"/>
        <end position="98"/>
    </location>
</feature>
<sequence length="566" mass="65464">MSKSRRVFLSIQGDDDFWGNGDQLEGKTLSSIKQQESKKMDDSVEGMEEEKYFFRQSKLGRQNLERLHEKEEQECEEERLDWSEKVDSEEEEEDIQEQDEIITEGKETEMFDSGPETDQKMPVDPNEGFYNNYRSYFSGRPEMLFLIRSIDESATDYYEKPFIDLYETTRKRLEMYPNTELNQILRCACNPNAGGGADYRVRNKHAVVVSNFREPDRRLGRYSKYYYHHNVGPEVYSRKVFVGGLPACVKEMDILHFFSRYGRLQVDWPSKHYGCKSDSDPSVYNEPSFTPPTSHLGLSSPPFGQINPFMTDCPPAPSDLQMSRHGSVDGGGGGFPTHGMSMRNIGFGGGSGPRSTGEGEKKQQHLGYVFLLFEKERSVRDLVTECFEEEEGLFIILESAIEPIRVQIRPWLLADAEFLMDFNVPINTKMVAFIGGVPRPLKAVELAHFFEQTYGNVVCVGIDIDNKFKYPRGSGRVAFSNYHAYVQAITDRYIVLDHEDIHKRVEIKPYFFHNQSCEECSSRYHRQYAPFFCPSLECFQYYCEPCWHKMHARPSRFHHMPVVKGI</sequence>